<keyword id="KW-0058">Aromatic hydrocarbons catabolism</keyword>
<keyword id="KW-0520">NAD</keyword>
<keyword id="KW-0560">Oxidoreductase</keyword>
<protein>
    <recommendedName>
        <fullName evidence="1">Acetaldehyde dehydrogenase 2</fullName>
        <ecNumber evidence="1">1.2.1.10</ecNumber>
    </recommendedName>
    <alternativeName>
        <fullName evidence="1">Acetaldehyde dehydrogenase [acetylating] 2</fullName>
    </alternativeName>
</protein>
<organism>
    <name type="scientific">Parafrankia sp. (strain EAN1pec)</name>
    <dbReference type="NCBI Taxonomy" id="298653"/>
    <lineage>
        <taxon>Bacteria</taxon>
        <taxon>Bacillati</taxon>
        <taxon>Actinomycetota</taxon>
        <taxon>Actinomycetes</taxon>
        <taxon>Frankiales</taxon>
        <taxon>Frankiaceae</taxon>
        <taxon>Parafrankia</taxon>
    </lineage>
</organism>
<sequence length="308" mass="32221">MQQVAIIGSGNIGTDLLIKIKRRSESLSVAAMVGIDPESDGLARARRLGVATTSDGVAGLLAMPEFEQAGIVLDATSANAHRANAAALAPYGRRLIDLTPAALGPFVVPAVNLDEHLSAPNVNMTTCGGQATVPIVAAISRVTPVAYAEIVATVASKSAGPGTRANIDEFTETTAHALESVGGARRGKAIIILNPAEPPLIMRDTVLCLVGDVDRDAVTESIHRMIADVAAYVPGYRLKQDVQFTPVDPAEMRILLPDDTVDVRWKVSVFLEVEGAAHYLPAYAGNLDIMTSAAVRVAERIAGAEVTA</sequence>
<gene>
    <name type="ordered locus">Franean1_4744</name>
</gene>
<accession>A8LEP9</accession>
<comment type="catalytic activity">
    <reaction evidence="1">
        <text>acetaldehyde + NAD(+) + CoA = acetyl-CoA + NADH + H(+)</text>
        <dbReference type="Rhea" id="RHEA:23288"/>
        <dbReference type="ChEBI" id="CHEBI:15343"/>
        <dbReference type="ChEBI" id="CHEBI:15378"/>
        <dbReference type="ChEBI" id="CHEBI:57287"/>
        <dbReference type="ChEBI" id="CHEBI:57288"/>
        <dbReference type="ChEBI" id="CHEBI:57540"/>
        <dbReference type="ChEBI" id="CHEBI:57945"/>
        <dbReference type="EC" id="1.2.1.10"/>
    </reaction>
</comment>
<comment type="similarity">
    <text evidence="1">Belongs to the acetaldehyde dehydrogenase family.</text>
</comment>
<reference key="1">
    <citation type="journal article" date="2007" name="Genome Res.">
        <title>Genome characteristics of facultatively symbiotic Frankia sp. strains reflect host range and host plant biogeography.</title>
        <authorList>
            <person name="Normand P."/>
            <person name="Lapierre P."/>
            <person name="Tisa L.S."/>
            <person name="Gogarten J.P."/>
            <person name="Alloisio N."/>
            <person name="Bagnarol E."/>
            <person name="Bassi C.A."/>
            <person name="Berry A.M."/>
            <person name="Bickhart D.M."/>
            <person name="Choisne N."/>
            <person name="Couloux A."/>
            <person name="Cournoyer B."/>
            <person name="Cruveiller S."/>
            <person name="Daubin V."/>
            <person name="Demange N."/>
            <person name="Francino M.P."/>
            <person name="Goltsman E."/>
            <person name="Huang Y."/>
            <person name="Kopp O.R."/>
            <person name="Labarre L."/>
            <person name="Lapidus A."/>
            <person name="Lavire C."/>
            <person name="Marechal J."/>
            <person name="Martinez M."/>
            <person name="Mastronunzio J.E."/>
            <person name="Mullin B.C."/>
            <person name="Niemann J."/>
            <person name="Pujic P."/>
            <person name="Rawnsley T."/>
            <person name="Rouy Z."/>
            <person name="Schenowitz C."/>
            <person name="Sellstedt A."/>
            <person name="Tavares F."/>
            <person name="Tomkins J.P."/>
            <person name="Vallenet D."/>
            <person name="Valverde C."/>
            <person name="Wall L.G."/>
            <person name="Wang Y."/>
            <person name="Medigue C."/>
            <person name="Benson D.R."/>
        </authorList>
    </citation>
    <scope>NUCLEOTIDE SEQUENCE [LARGE SCALE GENOMIC DNA]</scope>
    <source>
        <strain>EAN1pec</strain>
    </source>
</reference>
<dbReference type="EC" id="1.2.1.10" evidence="1"/>
<dbReference type="EMBL" id="CP000820">
    <property type="protein sequence ID" value="ABW14111.1"/>
    <property type="molecule type" value="Genomic_DNA"/>
</dbReference>
<dbReference type="RefSeq" id="WP_020462233.1">
    <property type="nucleotide sequence ID" value="NC_009921.1"/>
</dbReference>
<dbReference type="SMR" id="A8LEP9"/>
<dbReference type="STRING" id="298653.Franean1_4744"/>
<dbReference type="KEGG" id="fre:Franean1_4744"/>
<dbReference type="eggNOG" id="COG4569">
    <property type="taxonomic scope" value="Bacteria"/>
</dbReference>
<dbReference type="HOGENOM" id="CLU_062208_0_0_11"/>
<dbReference type="GO" id="GO:0008774">
    <property type="term" value="F:acetaldehyde dehydrogenase (acetylating) activity"/>
    <property type="evidence" value="ECO:0007669"/>
    <property type="project" value="UniProtKB-UniRule"/>
</dbReference>
<dbReference type="GO" id="GO:0051287">
    <property type="term" value="F:NAD binding"/>
    <property type="evidence" value="ECO:0007669"/>
    <property type="project" value="UniProtKB-UniRule"/>
</dbReference>
<dbReference type="GO" id="GO:0009056">
    <property type="term" value="P:catabolic process"/>
    <property type="evidence" value="ECO:0007669"/>
    <property type="project" value="UniProtKB-KW"/>
</dbReference>
<dbReference type="CDD" id="cd23933">
    <property type="entry name" value="ALDH_C"/>
    <property type="match status" value="1"/>
</dbReference>
<dbReference type="Gene3D" id="3.30.360.10">
    <property type="entry name" value="Dihydrodipicolinate Reductase, domain 2"/>
    <property type="match status" value="1"/>
</dbReference>
<dbReference type="Gene3D" id="3.40.50.720">
    <property type="entry name" value="NAD(P)-binding Rossmann-like Domain"/>
    <property type="match status" value="1"/>
</dbReference>
<dbReference type="HAMAP" id="MF_01657">
    <property type="entry name" value="Ac_ald_DH_ac"/>
    <property type="match status" value="1"/>
</dbReference>
<dbReference type="InterPro" id="IPR003361">
    <property type="entry name" value="Acetaldehyde_dehydrogenase"/>
</dbReference>
<dbReference type="InterPro" id="IPR015426">
    <property type="entry name" value="Acetylaldehyde_DH_C"/>
</dbReference>
<dbReference type="InterPro" id="IPR036291">
    <property type="entry name" value="NAD(P)-bd_dom_sf"/>
</dbReference>
<dbReference type="InterPro" id="IPR000534">
    <property type="entry name" value="Semialdehyde_DH_NAD-bd"/>
</dbReference>
<dbReference type="NCBIfam" id="TIGR03215">
    <property type="entry name" value="ac_ald_DH_ac"/>
    <property type="match status" value="1"/>
</dbReference>
<dbReference type="NCBIfam" id="NF006157">
    <property type="entry name" value="PRK08300.1"/>
    <property type="match status" value="1"/>
</dbReference>
<dbReference type="Pfam" id="PF09290">
    <property type="entry name" value="AcetDehyd-dimer"/>
    <property type="match status" value="1"/>
</dbReference>
<dbReference type="Pfam" id="PF01118">
    <property type="entry name" value="Semialdhyde_dh"/>
    <property type="match status" value="1"/>
</dbReference>
<dbReference type="PIRSF" id="PIRSF015689">
    <property type="entry name" value="Actaldh_dh_actl"/>
    <property type="match status" value="1"/>
</dbReference>
<dbReference type="SMART" id="SM00859">
    <property type="entry name" value="Semialdhyde_dh"/>
    <property type="match status" value="1"/>
</dbReference>
<dbReference type="SUPFAM" id="SSF55347">
    <property type="entry name" value="Glyceraldehyde-3-phosphate dehydrogenase-like, C-terminal domain"/>
    <property type="match status" value="1"/>
</dbReference>
<dbReference type="SUPFAM" id="SSF51735">
    <property type="entry name" value="NAD(P)-binding Rossmann-fold domains"/>
    <property type="match status" value="1"/>
</dbReference>
<evidence type="ECO:0000255" key="1">
    <source>
        <dbReference type="HAMAP-Rule" id="MF_01657"/>
    </source>
</evidence>
<feature type="chain" id="PRO_0000387662" description="Acetaldehyde dehydrogenase 2">
    <location>
        <begin position="1"/>
        <end position="308"/>
    </location>
</feature>
<feature type="active site" description="Acyl-thioester intermediate" evidence="1">
    <location>
        <position position="127"/>
    </location>
</feature>
<feature type="binding site" evidence="1">
    <location>
        <begin position="9"/>
        <end position="12"/>
    </location>
    <ligand>
        <name>NAD(+)</name>
        <dbReference type="ChEBI" id="CHEBI:57540"/>
    </ligand>
</feature>
<feature type="binding site" evidence="1">
    <location>
        <begin position="158"/>
        <end position="166"/>
    </location>
    <ligand>
        <name>NAD(+)</name>
        <dbReference type="ChEBI" id="CHEBI:57540"/>
    </ligand>
</feature>
<feature type="binding site" evidence="1">
    <location>
        <position position="286"/>
    </location>
    <ligand>
        <name>NAD(+)</name>
        <dbReference type="ChEBI" id="CHEBI:57540"/>
    </ligand>
</feature>
<name>ACDH2_PARS2</name>
<proteinExistence type="inferred from homology"/>